<gene>
    <name type="primary">tkt</name>
    <name type="ordered locus">BQ2027_MB1484C</name>
</gene>
<evidence type="ECO:0000250" key="1"/>
<evidence type="ECO:0000305" key="2"/>
<accession>P59956</accession>
<accession>A0A1R3XYE3</accession>
<accession>X2BHN3</accession>
<sequence length="700" mass="75541">MTTLEEISALTRPRHPDDWTEIDSAAVDTIRVLAADAVQKVGNGHPGTAMSLAPLAYTLFQRTMRHDPSDTHWLGRDRFVLSAGHSSLTLYIQLYLGGFGLELSDIESLRTWGSKTPGHPEFRHTPGVEITTGPLGQGLASAVGMAMASRYERGLFDPDAEPGASPFDHYIYVIASDGDIEEGVTSEASSLAAVQQLGNLIVFYDRNQISIEDDTNIALCEDTAARYRAYGWHVQEVEGGENVVGIEEAIANAQAVTDRPSFIALRTVIGYPAPNLMDTGKAHGAALGDDEVAAVKKIVGFDPDKTFQVREDVLTHTRGLVARGKQAHERWQLEFDAWARREPERKALLDRLLAQKLPDGWDADLPHWEPGSKALATRAASGAVLSALGPKLPELWGGSADLAGSNNTTIKGADSFGPPSISTKEYTAHWYGRTLHFGVREHAMGAILSGIVLHGPTRAYGGTFLQFSDYMRPAVRLAALMDIDTIYVWTHDSIGLGEDGPTHQPIEHLSALRAIPRLSVVRPADANETAYAWRTILARRNGSGPVGLILTRQGVPVLDGTDAEGVARGGYVLSDAGGLQPGEEPDVILIATGSEVQLAVAAQTLLADNDILARVVSMPCLEWFEAQPYEYRDAVLPPTVSARVAVEAGVAQCWHQLVGDTGEIVSIEHYGESADHKTLFREYGFTAEAVAAAAERALDN</sequence>
<reference key="1">
    <citation type="journal article" date="2003" name="Proc. Natl. Acad. Sci. U.S.A.">
        <title>The complete genome sequence of Mycobacterium bovis.</title>
        <authorList>
            <person name="Garnier T."/>
            <person name="Eiglmeier K."/>
            <person name="Camus J.-C."/>
            <person name="Medina N."/>
            <person name="Mansoor H."/>
            <person name="Pryor M."/>
            <person name="Duthoy S."/>
            <person name="Grondin S."/>
            <person name="Lacroix C."/>
            <person name="Monsempe C."/>
            <person name="Simon S."/>
            <person name="Harris B."/>
            <person name="Atkin R."/>
            <person name="Doggett J."/>
            <person name="Mayes R."/>
            <person name="Keating L."/>
            <person name="Wheeler P.R."/>
            <person name="Parkhill J."/>
            <person name="Barrell B.G."/>
            <person name="Cole S.T."/>
            <person name="Gordon S.V."/>
            <person name="Hewinson R.G."/>
        </authorList>
    </citation>
    <scope>NUCLEOTIDE SEQUENCE [LARGE SCALE GENOMIC DNA]</scope>
    <source>
        <strain>ATCC BAA-935 / AF2122/97</strain>
    </source>
</reference>
<reference key="2">
    <citation type="journal article" date="2017" name="Genome Announc.">
        <title>Updated reference genome sequence and annotation of Mycobacterium bovis AF2122/97.</title>
        <authorList>
            <person name="Malone K.M."/>
            <person name="Farrell D."/>
            <person name="Stuber T.P."/>
            <person name="Schubert O.T."/>
            <person name="Aebersold R."/>
            <person name="Robbe-Austerman S."/>
            <person name="Gordon S.V."/>
        </authorList>
    </citation>
    <scope>NUCLEOTIDE SEQUENCE [LARGE SCALE GENOMIC DNA]</scope>
    <scope>GENOME REANNOTATION</scope>
    <source>
        <strain>ATCC BAA-935 / AF2122/97</strain>
    </source>
</reference>
<dbReference type="EC" id="2.2.1.1"/>
<dbReference type="EMBL" id="LT708304">
    <property type="protein sequence ID" value="SIU00087.1"/>
    <property type="molecule type" value="Genomic_DNA"/>
</dbReference>
<dbReference type="RefSeq" id="NP_855136.1">
    <property type="nucleotide sequence ID" value="NC_002945.3"/>
</dbReference>
<dbReference type="RefSeq" id="WP_003407451.1">
    <property type="nucleotide sequence ID" value="NC_002945.4"/>
</dbReference>
<dbReference type="SMR" id="P59956"/>
<dbReference type="KEGG" id="mbo:BQ2027_MB1484C"/>
<dbReference type="PATRIC" id="fig|233413.5.peg.1623"/>
<dbReference type="Proteomes" id="UP000001419">
    <property type="component" value="Chromosome"/>
</dbReference>
<dbReference type="GO" id="GO:0005829">
    <property type="term" value="C:cytosol"/>
    <property type="evidence" value="ECO:0007669"/>
    <property type="project" value="TreeGrafter"/>
</dbReference>
<dbReference type="GO" id="GO:0000287">
    <property type="term" value="F:magnesium ion binding"/>
    <property type="evidence" value="ECO:0007669"/>
    <property type="project" value="UniProtKB-ARBA"/>
</dbReference>
<dbReference type="GO" id="GO:0004802">
    <property type="term" value="F:transketolase activity"/>
    <property type="evidence" value="ECO:0007669"/>
    <property type="project" value="UniProtKB-EC"/>
</dbReference>
<dbReference type="GO" id="GO:0006098">
    <property type="term" value="P:pentose-phosphate shunt"/>
    <property type="evidence" value="ECO:0007669"/>
    <property type="project" value="TreeGrafter"/>
</dbReference>
<dbReference type="CDD" id="cd07033">
    <property type="entry name" value="TPP_PYR_DXS_TK_like"/>
    <property type="match status" value="1"/>
</dbReference>
<dbReference type="CDD" id="cd02012">
    <property type="entry name" value="TPP_TK"/>
    <property type="match status" value="1"/>
</dbReference>
<dbReference type="FunFam" id="3.40.50.920:FF:000003">
    <property type="entry name" value="Transketolase"/>
    <property type="match status" value="1"/>
</dbReference>
<dbReference type="FunFam" id="3.40.50.970:FF:000003">
    <property type="entry name" value="Transketolase"/>
    <property type="match status" value="1"/>
</dbReference>
<dbReference type="FunFam" id="3.40.50.970:FF:000004">
    <property type="entry name" value="Transketolase"/>
    <property type="match status" value="1"/>
</dbReference>
<dbReference type="Gene3D" id="3.40.50.920">
    <property type="match status" value="1"/>
</dbReference>
<dbReference type="Gene3D" id="3.40.50.970">
    <property type="match status" value="2"/>
</dbReference>
<dbReference type="InterPro" id="IPR029061">
    <property type="entry name" value="THDP-binding"/>
</dbReference>
<dbReference type="InterPro" id="IPR009014">
    <property type="entry name" value="Transketo_C/PFOR_II"/>
</dbReference>
<dbReference type="InterPro" id="IPR055152">
    <property type="entry name" value="Transketolase-like_C_2"/>
</dbReference>
<dbReference type="InterPro" id="IPR005475">
    <property type="entry name" value="Transketolase-like_Pyr-bd"/>
</dbReference>
<dbReference type="InterPro" id="IPR005478">
    <property type="entry name" value="Transketolase_bac-like"/>
</dbReference>
<dbReference type="InterPro" id="IPR020826">
    <property type="entry name" value="Transketolase_BS"/>
</dbReference>
<dbReference type="InterPro" id="IPR049557">
    <property type="entry name" value="Transketolase_CS"/>
</dbReference>
<dbReference type="InterPro" id="IPR033247">
    <property type="entry name" value="Transketolase_fam"/>
</dbReference>
<dbReference type="InterPro" id="IPR005474">
    <property type="entry name" value="Transketolase_N"/>
</dbReference>
<dbReference type="NCBIfam" id="TIGR00232">
    <property type="entry name" value="tktlase_bact"/>
    <property type="match status" value="1"/>
</dbReference>
<dbReference type="PANTHER" id="PTHR43522">
    <property type="entry name" value="TRANSKETOLASE"/>
    <property type="match status" value="1"/>
</dbReference>
<dbReference type="PANTHER" id="PTHR43522:SF2">
    <property type="entry name" value="TRANSKETOLASE 1-RELATED"/>
    <property type="match status" value="1"/>
</dbReference>
<dbReference type="Pfam" id="PF02779">
    <property type="entry name" value="Transket_pyr"/>
    <property type="match status" value="1"/>
</dbReference>
<dbReference type="Pfam" id="PF22613">
    <property type="entry name" value="Transketolase_C_1"/>
    <property type="match status" value="1"/>
</dbReference>
<dbReference type="Pfam" id="PF00456">
    <property type="entry name" value="Transketolase_N"/>
    <property type="match status" value="1"/>
</dbReference>
<dbReference type="SMART" id="SM00861">
    <property type="entry name" value="Transket_pyr"/>
    <property type="match status" value="1"/>
</dbReference>
<dbReference type="SUPFAM" id="SSF52518">
    <property type="entry name" value="Thiamin diphosphate-binding fold (THDP-binding)"/>
    <property type="match status" value="2"/>
</dbReference>
<dbReference type="SUPFAM" id="SSF52922">
    <property type="entry name" value="TK C-terminal domain-like"/>
    <property type="match status" value="1"/>
</dbReference>
<dbReference type="PROSITE" id="PS00801">
    <property type="entry name" value="TRANSKETOLASE_1"/>
    <property type="match status" value="1"/>
</dbReference>
<dbReference type="PROSITE" id="PS00802">
    <property type="entry name" value="TRANSKETOLASE_2"/>
    <property type="match status" value="1"/>
</dbReference>
<feature type="chain" id="PRO_0000191860" description="Transketolase">
    <location>
        <begin position="1"/>
        <end position="700"/>
    </location>
</feature>
<feature type="active site" description="Proton donor" evidence="1">
    <location>
        <position position="441"/>
    </location>
</feature>
<feature type="binding site" evidence="1">
    <location>
        <position position="45"/>
    </location>
    <ligand>
        <name>substrate</name>
    </ligand>
</feature>
<feature type="binding site" evidence="1">
    <location>
        <position position="48"/>
    </location>
    <ligand>
        <name>thiamine diphosphate</name>
        <dbReference type="ChEBI" id="CHEBI:58937"/>
    </ligand>
</feature>
<feature type="binding site" evidence="1">
    <location>
        <position position="85"/>
    </location>
    <ligand>
        <name>thiamine diphosphate</name>
        <dbReference type="ChEBI" id="CHEBI:58937"/>
    </ligand>
</feature>
<feature type="binding site" evidence="1">
    <location>
        <begin position="133"/>
        <end position="135"/>
    </location>
    <ligand>
        <name>thiamine diphosphate</name>
        <dbReference type="ChEBI" id="CHEBI:58937"/>
    </ligand>
</feature>
<feature type="binding site" evidence="1">
    <location>
        <position position="177"/>
    </location>
    <ligand>
        <name>Mg(2+)</name>
        <dbReference type="ChEBI" id="CHEBI:18420"/>
    </ligand>
</feature>
<feature type="binding site" evidence="1">
    <location>
        <position position="178"/>
    </location>
    <ligand>
        <name>thiamine diphosphate</name>
        <dbReference type="ChEBI" id="CHEBI:58937"/>
    </ligand>
</feature>
<feature type="binding site" evidence="1">
    <location>
        <position position="207"/>
    </location>
    <ligand>
        <name>Mg(2+)</name>
        <dbReference type="ChEBI" id="CHEBI:18420"/>
    </ligand>
</feature>
<feature type="binding site" evidence="1">
    <location>
        <position position="207"/>
    </location>
    <ligand>
        <name>thiamine diphosphate</name>
        <dbReference type="ChEBI" id="CHEBI:58937"/>
    </ligand>
</feature>
<feature type="binding site" evidence="1">
    <location>
        <position position="209"/>
    </location>
    <ligand>
        <name>Mg(2+)</name>
        <dbReference type="ChEBI" id="CHEBI:18420"/>
    </ligand>
</feature>
<feature type="binding site" evidence="1">
    <location>
        <position position="283"/>
    </location>
    <ligand>
        <name>substrate</name>
    </ligand>
</feature>
<feature type="binding site" evidence="1">
    <location>
        <position position="283"/>
    </location>
    <ligand>
        <name>thiamine diphosphate</name>
        <dbReference type="ChEBI" id="CHEBI:58937"/>
    </ligand>
</feature>
<feature type="binding site" evidence="1">
    <location>
        <position position="378"/>
    </location>
    <ligand>
        <name>substrate</name>
    </ligand>
</feature>
<feature type="binding site" evidence="1">
    <location>
        <position position="405"/>
    </location>
    <ligand>
        <name>substrate</name>
    </ligand>
</feature>
<feature type="binding site" evidence="1">
    <location>
        <position position="467"/>
    </location>
    <ligand>
        <name>thiamine diphosphate</name>
        <dbReference type="ChEBI" id="CHEBI:58937"/>
    </ligand>
</feature>
<feature type="binding site" evidence="1">
    <location>
        <position position="491"/>
    </location>
    <ligand>
        <name>substrate</name>
    </ligand>
</feature>
<feature type="binding site" evidence="1">
    <location>
        <position position="499"/>
    </location>
    <ligand>
        <name>substrate</name>
    </ligand>
</feature>
<feature type="binding site" evidence="1">
    <location>
        <position position="552"/>
    </location>
    <ligand>
        <name>substrate</name>
    </ligand>
</feature>
<feature type="site" description="Important for catalytic activity" evidence="1">
    <location>
        <position position="45"/>
    </location>
</feature>
<feature type="site" description="Important for catalytic activity" evidence="1">
    <location>
        <position position="283"/>
    </location>
</feature>
<proteinExistence type="inferred from homology"/>
<keyword id="KW-0106">Calcium</keyword>
<keyword id="KW-0460">Magnesium</keyword>
<keyword id="KW-0479">Metal-binding</keyword>
<keyword id="KW-1185">Reference proteome</keyword>
<keyword id="KW-0786">Thiamine pyrophosphate</keyword>
<keyword id="KW-0808">Transferase</keyword>
<organism>
    <name type="scientific">Mycobacterium bovis (strain ATCC BAA-935 / AF2122/97)</name>
    <dbReference type="NCBI Taxonomy" id="233413"/>
    <lineage>
        <taxon>Bacteria</taxon>
        <taxon>Bacillati</taxon>
        <taxon>Actinomycetota</taxon>
        <taxon>Actinomycetes</taxon>
        <taxon>Mycobacteriales</taxon>
        <taxon>Mycobacteriaceae</taxon>
        <taxon>Mycobacterium</taxon>
        <taxon>Mycobacterium tuberculosis complex</taxon>
    </lineage>
</organism>
<protein>
    <recommendedName>
        <fullName>Transketolase</fullName>
        <shortName>TK</shortName>
        <ecNumber>2.2.1.1</ecNumber>
    </recommendedName>
</protein>
<name>TKT_MYCBO</name>
<comment type="function">
    <text evidence="1">Catalyzes the transfer of a two-carbon ketol group from a ketose donor to an aldose acceptor, via a covalent intermediate with the cofactor thiamine pyrophosphate.</text>
</comment>
<comment type="catalytic activity">
    <reaction>
        <text>D-sedoheptulose 7-phosphate + D-glyceraldehyde 3-phosphate = aldehydo-D-ribose 5-phosphate + D-xylulose 5-phosphate</text>
        <dbReference type="Rhea" id="RHEA:10508"/>
        <dbReference type="ChEBI" id="CHEBI:57483"/>
        <dbReference type="ChEBI" id="CHEBI:57737"/>
        <dbReference type="ChEBI" id="CHEBI:58273"/>
        <dbReference type="ChEBI" id="CHEBI:59776"/>
        <dbReference type="EC" id="2.2.1.1"/>
    </reaction>
</comment>
<comment type="cofactor">
    <cofactor evidence="1">
        <name>Mg(2+)</name>
        <dbReference type="ChEBI" id="CHEBI:18420"/>
    </cofactor>
    <cofactor evidence="1">
        <name>Ca(2+)</name>
        <dbReference type="ChEBI" id="CHEBI:29108"/>
    </cofactor>
    <cofactor evidence="1">
        <name>Mn(2+)</name>
        <dbReference type="ChEBI" id="CHEBI:29035"/>
    </cofactor>
    <cofactor evidence="1">
        <name>Co(2+)</name>
        <dbReference type="ChEBI" id="CHEBI:48828"/>
    </cofactor>
    <text evidence="1">Binds 1 Mg(2+) ion per subunit. Can also utilize other divalent metal cations, such as Ca(2+), Mn(2+) and Co(2+).</text>
</comment>
<comment type="cofactor">
    <cofactor evidence="1">
        <name>thiamine diphosphate</name>
        <dbReference type="ChEBI" id="CHEBI:58937"/>
    </cofactor>
    <text evidence="1">Binds 1 thiamine pyrophosphate per subunit.</text>
</comment>
<comment type="subunit">
    <text evidence="1">Homodimer.</text>
</comment>
<comment type="similarity">
    <text evidence="2">Belongs to the transketolase family.</text>
</comment>